<dbReference type="EC" id="3.1.26.11" evidence="1"/>
<dbReference type="EMBL" id="AP006716">
    <property type="protein sequence ID" value="BAE04721.1"/>
    <property type="molecule type" value="Genomic_DNA"/>
</dbReference>
<dbReference type="RefSeq" id="WP_011275708.1">
    <property type="nucleotide sequence ID" value="NC_007168.1"/>
</dbReference>
<dbReference type="SMR" id="Q4L6K4"/>
<dbReference type="GeneID" id="93780810"/>
<dbReference type="KEGG" id="sha:SH1412"/>
<dbReference type="eggNOG" id="COG1234">
    <property type="taxonomic scope" value="Bacteria"/>
</dbReference>
<dbReference type="HOGENOM" id="CLU_031317_2_0_9"/>
<dbReference type="OrthoDB" id="9800940at2"/>
<dbReference type="Proteomes" id="UP000000543">
    <property type="component" value="Chromosome"/>
</dbReference>
<dbReference type="GO" id="GO:0042781">
    <property type="term" value="F:3'-tRNA processing endoribonuclease activity"/>
    <property type="evidence" value="ECO:0007669"/>
    <property type="project" value="UniProtKB-UniRule"/>
</dbReference>
<dbReference type="GO" id="GO:0008270">
    <property type="term" value="F:zinc ion binding"/>
    <property type="evidence" value="ECO:0007669"/>
    <property type="project" value="UniProtKB-UniRule"/>
</dbReference>
<dbReference type="CDD" id="cd07717">
    <property type="entry name" value="RNaseZ_ZiPD-like_MBL-fold"/>
    <property type="match status" value="1"/>
</dbReference>
<dbReference type="FunFam" id="3.60.15.10:FF:000002">
    <property type="entry name" value="Ribonuclease Z"/>
    <property type="match status" value="1"/>
</dbReference>
<dbReference type="Gene3D" id="3.60.15.10">
    <property type="entry name" value="Ribonuclease Z/Hydroxyacylglutathione hydrolase-like"/>
    <property type="match status" value="1"/>
</dbReference>
<dbReference type="HAMAP" id="MF_01818">
    <property type="entry name" value="RNase_Z_BN"/>
    <property type="match status" value="1"/>
</dbReference>
<dbReference type="InterPro" id="IPR001279">
    <property type="entry name" value="Metallo-B-lactamas"/>
</dbReference>
<dbReference type="InterPro" id="IPR036866">
    <property type="entry name" value="RibonucZ/Hydroxyglut_hydro"/>
</dbReference>
<dbReference type="InterPro" id="IPR013471">
    <property type="entry name" value="RNase_Z/BN"/>
</dbReference>
<dbReference type="NCBIfam" id="NF000801">
    <property type="entry name" value="PRK00055.1-3"/>
    <property type="match status" value="1"/>
</dbReference>
<dbReference type="NCBIfam" id="TIGR02651">
    <property type="entry name" value="RNase_Z"/>
    <property type="match status" value="1"/>
</dbReference>
<dbReference type="PANTHER" id="PTHR46018">
    <property type="entry name" value="ZINC PHOSPHODIESTERASE ELAC PROTEIN 1"/>
    <property type="match status" value="1"/>
</dbReference>
<dbReference type="PANTHER" id="PTHR46018:SF2">
    <property type="entry name" value="ZINC PHOSPHODIESTERASE ELAC PROTEIN 1"/>
    <property type="match status" value="1"/>
</dbReference>
<dbReference type="Pfam" id="PF12706">
    <property type="entry name" value="Lactamase_B_2"/>
    <property type="match status" value="1"/>
</dbReference>
<dbReference type="SUPFAM" id="SSF56281">
    <property type="entry name" value="Metallo-hydrolase/oxidoreductase"/>
    <property type="match status" value="1"/>
</dbReference>
<gene>
    <name evidence="1" type="primary">rnz</name>
    <name type="ordered locus">SH1412</name>
</gene>
<organism>
    <name type="scientific">Staphylococcus haemolyticus (strain JCSC1435)</name>
    <dbReference type="NCBI Taxonomy" id="279808"/>
    <lineage>
        <taxon>Bacteria</taxon>
        <taxon>Bacillati</taxon>
        <taxon>Bacillota</taxon>
        <taxon>Bacilli</taxon>
        <taxon>Bacillales</taxon>
        <taxon>Staphylococcaceae</taxon>
        <taxon>Staphylococcus</taxon>
    </lineage>
</organism>
<reference key="1">
    <citation type="journal article" date="2005" name="J. Bacteriol.">
        <title>Whole-genome sequencing of Staphylococcus haemolyticus uncovers the extreme plasticity of its genome and the evolution of human-colonizing staphylococcal species.</title>
        <authorList>
            <person name="Takeuchi F."/>
            <person name="Watanabe S."/>
            <person name="Baba T."/>
            <person name="Yuzawa H."/>
            <person name="Ito T."/>
            <person name="Morimoto Y."/>
            <person name="Kuroda M."/>
            <person name="Cui L."/>
            <person name="Takahashi M."/>
            <person name="Ankai A."/>
            <person name="Baba S."/>
            <person name="Fukui S."/>
            <person name="Lee J.C."/>
            <person name="Hiramatsu K."/>
        </authorList>
    </citation>
    <scope>NUCLEOTIDE SEQUENCE [LARGE SCALE GENOMIC DNA]</scope>
    <source>
        <strain>JCSC1435</strain>
    </source>
</reference>
<comment type="function">
    <text evidence="1">Zinc phosphodiesterase, which displays some tRNA 3'-processing endonuclease activity. Probably involved in tRNA maturation, by removing a 3'-trailer from precursor tRNA.</text>
</comment>
<comment type="catalytic activity">
    <reaction evidence="1">
        <text>Endonucleolytic cleavage of RNA, removing extra 3' nucleotides from tRNA precursor, generating 3' termini of tRNAs. A 3'-hydroxy group is left at the tRNA terminus and a 5'-phosphoryl group is left at the trailer molecule.</text>
        <dbReference type="EC" id="3.1.26.11"/>
    </reaction>
</comment>
<comment type="cofactor">
    <cofactor evidence="1">
        <name>Zn(2+)</name>
        <dbReference type="ChEBI" id="CHEBI:29105"/>
    </cofactor>
    <text evidence="1">Binds 2 Zn(2+) ions.</text>
</comment>
<comment type="subunit">
    <text evidence="1">Homodimer.</text>
</comment>
<comment type="similarity">
    <text evidence="1">Belongs to the RNase Z family.</text>
</comment>
<evidence type="ECO:0000255" key="1">
    <source>
        <dbReference type="HAMAP-Rule" id="MF_01818"/>
    </source>
</evidence>
<accession>Q4L6K4</accession>
<feature type="chain" id="PRO_1000070331" description="Ribonuclease Z">
    <location>
        <begin position="1"/>
        <end position="306"/>
    </location>
</feature>
<feature type="active site" description="Proton acceptor" evidence="1">
    <location>
        <position position="67"/>
    </location>
</feature>
<feature type="binding site" evidence="1">
    <location>
        <position position="63"/>
    </location>
    <ligand>
        <name>Zn(2+)</name>
        <dbReference type="ChEBI" id="CHEBI:29105"/>
        <label>1</label>
        <note>catalytic</note>
    </ligand>
</feature>
<feature type="binding site" evidence="1">
    <location>
        <position position="65"/>
    </location>
    <ligand>
        <name>Zn(2+)</name>
        <dbReference type="ChEBI" id="CHEBI:29105"/>
        <label>1</label>
        <note>catalytic</note>
    </ligand>
</feature>
<feature type="binding site" evidence="1">
    <location>
        <position position="67"/>
    </location>
    <ligand>
        <name>Zn(2+)</name>
        <dbReference type="ChEBI" id="CHEBI:29105"/>
        <label>2</label>
        <note>catalytic</note>
    </ligand>
</feature>
<feature type="binding site" evidence="1">
    <location>
        <position position="68"/>
    </location>
    <ligand>
        <name>Zn(2+)</name>
        <dbReference type="ChEBI" id="CHEBI:29105"/>
        <label>2</label>
        <note>catalytic</note>
    </ligand>
</feature>
<feature type="binding site" evidence="1">
    <location>
        <position position="141"/>
    </location>
    <ligand>
        <name>Zn(2+)</name>
        <dbReference type="ChEBI" id="CHEBI:29105"/>
        <label>1</label>
        <note>catalytic</note>
    </ligand>
</feature>
<feature type="binding site" evidence="1">
    <location>
        <position position="211"/>
    </location>
    <ligand>
        <name>Zn(2+)</name>
        <dbReference type="ChEBI" id="CHEBI:29105"/>
        <label>1</label>
        <note>catalytic</note>
    </ligand>
</feature>
<feature type="binding site" evidence="1">
    <location>
        <position position="211"/>
    </location>
    <ligand>
        <name>Zn(2+)</name>
        <dbReference type="ChEBI" id="CHEBI:29105"/>
        <label>2</label>
        <note>catalytic</note>
    </ligand>
</feature>
<feature type="binding site" evidence="1">
    <location>
        <position position="269"/>
    </location>
    <ligand>
        <name>Zn(2+)</name>
        <dbReference type="ChEBI" id="CHEBI:29105"/>
        <label>2</label>
        <note>catalytic</note>
    </ligand>
</feature>
<sequence>MEVTFFGTSAGLPTKERNTQAIALNLEPFSNSIWLFDVGEGTQHQILHHSIKLGKVDHIFITHMHGDHIFGLPGLLTSRSFQGGEDKPLTVIGPRGLQQFIETTLRLSESHLNYPITYIEIDNHFTYHHKGFSISAHLLNHGIPSYGYRIESPTTPGTIDVEALKSIGLYPGPKYQEVKSYDNFEHEGQVYNSDDFKGPAKPGPIISIFGDTKPCQSELSIAKDSDVMIHEATYIEGEKTLANNYHHSHIEDVFELIKQANVKRCLITHLSNRYNHENIQLIKQQLKTHEDVPNFEFVKDFDTFII</sequence>
<keyword id="KW-0255">Endonuclease</keyword>
<keyword id="KW-0378">Hydrolase</keyword>
<keyword id="KW-0479">Metal-binding</keyword>
<keyword id="KW-0540">Nuclease</keyword>
<keyword id="KW-0819">tRNA processing</keyword>
<keyword id="KW-0862">Zinc</keyword>
<name>RNZ_STAHJ</name>
<proteinExistence type="inferred from homology"/>
<protein>
    <recommendedName>
        <fullName evidence="1">Ribonuclease Z</fullName>
        <shortName evidence="1">RNase Z</shortName>
        <ecNumber evidence="1">3.1.26.11</ecNumber>
    </recommendedName>
    <alternativeName>
        <fullName evidence="1">tRNA 3 endonuclease</fullName>
    </alternativeName>
    <alternativeName>
        <fullName evidence="1">tRNase Z</fullName>
    </alternativeName>
</protein>